<name>PSBM_LEPVR</name>
<protein>
    <recommendedName>
        <fullName evidence="1">Photosystem II reaction center protein M</fullName>
        <shortName evidence="1">PSII-M</shortName>
    </recommendedName>
</protein>
<geneLocation type="chloroplast"/>
<proteinExistence type="inferred from homology"/>
<sequence length="34" mass="3783">MEVNILAFIATALFILVPTAFLLIIYVKTVSQND</sequence>
<feature type="chain" id="PRO_0000325739" description="Photosystem II reaction center protein M">
    <location>
        <begin position="1"/>
        <end position="34"/>
    </location>
</feature>
<feature type="transmembrane region" description="Helical" evidence="1">
    <location>
        <begin position="5"/>
        <end position="25"/>
    </location>
</feature>
<gene>
    <name evidence="1" type="primary">psbM</name>
</gene>
<accession>A4QLA0</accession>
<keyword id="KW-0150">Chloroplast</keyword>
<keyword id="KW-0472">Membrane</keyword>
<keyword id="KW-0602">Photosynthesis</keyword>
<keyword id="KW-0604">Photosystem II</keyword>
<keyword id="KW-0934">Plastid</keyword>
<keyword id="KW-0674">Reaction center</keyword>
<keyword id="KW-0793">Thylakoid</keyword>
<keyword id="KW-0812">Transmembrane</keyword>
<keyword id="KW-1133">Transmembrane helix</keyword>
<evidence type="ECO:0000255" key="1">
    <source>
        <dbReference type="HAMAP-Rule" id="MF_00438"/>
    </source>
</evidence>
<comment type="function">
    <text evidence="1">One of the components of the core complex of photosystem II (PSII). PSII is a light-driven water:plastoquinone oxidoreductase that uses light energy to abstract electrons from H(2)O, generating O(2) and a proton gradient subsequently used for ATP formation. It consists of a core antenna complex that captures photons, and an electron transfer chain that converts photonic excitation into a charge separation. This subunit is found at the monomer-monomer interface.</text>
</comment>
<comment type="subunit">
    <text evidence="1">PSII is composed of 1 copy each of membrane proteins PsbA, PsbB, PsbC, PsbD, PsbE, PsbF, PsbH, PsbI, PsbJ, PsbK, PsbL, PsbM, PsbT, PsbX, PsbY, PsbZ, Psb30/Ycf12, at least 3 peripheral proteins of the oxygen-evolving complex and a large number of cofactors. It forms dimeric complexes.</text>
</comment>
<comment type="subcellular location">
    <subcellularLocation>
        <location evidence="1">Plastid</location>
        <location evidence="1">Chloroplast thylakoid membrane</location>
        <topology evidence="1">Single-pass membrane protein</topology>
    </subcellularLocation>
</comment>
<comment type="similarity">
    <text evidence="1">Belongs to the PsbM family.</text>
</comment>
<reference key="1">
    <citation type="submission" date="2007-03" db="EMBL/GenBank/DDBJ databases">
        <title>Sequencing analysis of Lepidium virginicum JO26 chloroplast DNA.</title>
        <authorList>
            <person name="Hosouchi T."/>
            <person name="Tsuruoka H."/>
            <person name="Kotani H."/>
        </authorList>
    </citation>
    <scope>NUCLEOTIDE SEQUENCE [LARGE SCALE GENOMIC DNA]</scope>
</reference>
<dbReference type="EMBL" id="AP009374">
    <property type="protein sequence ID" value="BAF50455.1"/>
    <property type="molecule type" value="Genomic_DNA"/>
</dbReference>
<dbReference type="RefSeq" id="YP_001123631.1">
    <property type="nucleotide sequence ID" value="NC_009273.1"/>
</dbReference>
<dbReference type="SMR" id="A4QLA0"/>
<dbReference type="GeneID" id="4962001"/>
<dbReference type="GO" id="GO:0009535">
    <property type="term" value="C:chloroplast thylakoid membrane"/>
    <property type="evidence" value="ECO:0007669"/>
    <property type="project" value="UniProtKB-SubCell"/>
</dbReference>
<dbReference type="GO" id="GO:0009523">
    <property type="term" value="C:photosystem II"/>
    <property type="evidence" value="ECO:0007669"/>
    <property type="project" value="UniProtKB-KW"/>
</dbReference>
<dbReference type="GO" id="GO:0019684">
    <property type="term" value="P:photosynthesis, light reaction"/>
    <property type="evidence" value="ECO:0007669"/>
    <property type="project" value="InterPro"/>
</dbReference>
<dbReference type="HAMAP" id="MF_00438">
    <property type="entry name" value="PSII_PsbM"/>
    <property type="match status" value="1"/>
</dbReference>
<dbReference type="InterPro" id="IPR007826">
    <property type="entry name" value="PSII_PsbM"/>
</dbReference>
<dbReference type="InterPro" id="IPR037269">
    <property type="entry name" value="PSII_PsbM_sf"/>
</dbReference>
<dbReference type="NCBIfam" id="TIGR03038">
    <property type="entry name" value="PS_II_psbM"/>
    <property type="match status" value="1"/>
</dbReference>
<dbReference type="PANTHER" id="PTHR35774">
    <property type="entry name" value="PHOTOSYSTEM II REACTION CENTER PROTEIN M"/>
    <property type="match status" value="1"/>
</dbReference>
<dbReference type="PANTHER" id="PTHR35774:SF1">
    <property type="entry name" value="PHOTOSYSTEM II REACTION CENTER PROTEIN M"/>
    <property type="match status" value="1"/>
</dbReference>
<dbReference type="Pfam" id="PF05151">
    <property type="entry name" value="PsbM"/>
    <property type="match status" value="1"/>
</dbReference>
<dbReference type="SUPFAM" id="SSF161033">
    <property type="entry name" value="Photosystem II reaction center protein M, PsbM"/>
    <property type="match status" value="1"/>
</dbReference>
<organism>
    <name type="scientific">Lepidium virginicum</name>
    <name type="common">Virginia pepperweed</name>
    <dbReference type="NCBI Taxonomy" id="59292"/>
    <lineage>
        <taxon>Eukaryota</taxon>
        <taxon>Viridiplantae</taxon>
        <taxon>Streptophyta</taxon>
        <taxon>Embryophyta</taxon>
        <taxon>Tracheophyta</taxon>
        <taxon>Spermatophyta</taxon>
        <taxon>Magnoliopsida</taxon>
        <taxon>eudicotyledons</taxon>
        <taxon>Gunneridae</taxon>
        <taxon>Pentapetalae</taxon>
        <taxon>rosids</taxon>
        <taxon>malvids</taxon>
        <taxon>Brassicales</taxon>
        <taxon>Brassicaceae</taxon>
        <taxon>Lepidieae</taxon>
        <taxon>Lepidium</taxon>
    </lineage>
</organism>